<evidence type="ECO:0000255" key="1">
    <source>
        <dbReference type="HAMAP-Rule" id="MF_00268"/>
    </source>
</evidence>
<organism>
    <name type="scientific">Rickettsia massiliae (strain Mtu5)</name>
    <dbReference type="NCBI Taxonomy" id="416276"/>
    <lineage>
        <taxon>Bacteria</taxon>
        <taxon>Pseudomonadati</taxon>
        <taxon>Pseudomonadota</taxon>
        <taxon>Alphaproteobacteria</taxon>
        <taxon>Rickettsiales</taxon>
        <taxon>Rickettsiaceae</taxon>
        <taxon>Rickettsieae</taxon>
        <taxon>Rickettsia</taxon>
        <taxon>spotted fever group</taxon>
    </lineage>
</organism>
<dbReference type="EMBL" id="CP000683">
    <property type="protein sequence ID" value="ABV85186.1"/>
    <property type="molecule type" value="Genomic_DNA"/>
</dbReference>
<dbReference type="RefSeq" id="WP_012153149.1">
    <property type="nucleotide sequence ID" value="NC_009900.1"/>
</dbReference>
<dbReference type="SMR" id="A8F2Q0"/>
<dbReference type="KEGG" id="rms:RMA_1203"/>
<dbReference type="HOGENOM" id="CLU_040469_3_2_5"/>
<dbReference type="Proteomes" id="UP000001311">
    <property type="component" value="Chromosome"/>
</dbReference>
<dbReference type="GO" id="GO:0005829">
    <property type="term" value="C:cytosol"/>
    <property type="evidence" value="ECO:0007669"/>
    <property type="project" value="TreeGrafter"/>
</dbReference>
<dbReference type="GO" id="GO:0005524">
    <property type="term" value="F:ATP binding"/>
    <property type="evidence" value="ECO:0007669"/>
    <property type="project" value="UniProtKB-UniRule"/>
</dbReference>
<dbReference type="GO" id="GO:0016887">
    <property type="term" value="F:ATP hydrolysis activity"/>
    <property type="evidence" value="ECO:0007669"/>
    <property type="project" value="InterPro"/>
</dbReference>
<dbReference type="GO" id="GO:0140664">
    <property type="term" value="F:ATP-dependent DNA damage sensor activity"/>
    <property type="evidence" value="ECO:0007669"/>
    <property type="project" value="InterPro"/>
</dbReference>
<dbReference type="GO" id="GO:0003684">
    <property type="term" value="F:damaged DNA binding"/>
    <property type="evidence" value="ECO:0007669"/>
    <property type="project" value="UniProtKB-UniRule"/>
</dbReference>
<dbReference type="GO" id="GO:0003697">
    <property type="term" value="F:single-stranded DNA binding"/>
    <property type="evidence" value="ECO:0007669"/>
    <property type="project" value="UniProtKB-UniRule"/>
</dbReference>
<dbReference type="GO" id="GO:0006310">
    <property type="term" value="P:DNA recombination"/>
    <property type="evidence" value="ECO:0007669"/>
    <property type="project" value="UniProtKB-UniRule"/>
</dbReference>
<dbReference type="GO" id="GO:0006281">
    <property type="term" value="P:DNA repair"/>
    <property type="evidence" value="ECO:0007669"/>
    <property type="project" value="UniProtKB-UniRule"/>
</dbReference>
<dbReference type="GO" id="GO:0009432">
    <property type="term" value="P:SOS response"/>
    <property type="evidence" value="ECO:0007669"/>
    <property type="project" value="UniProtKB-UniRule"/>
</dbReference>
<dbReference type="CDD" id="cd00983">
    <property type="entry name" value="RecA"/>
    <property type="match status" value="1"/>
</dbReference>
<dbReference type="FunFam" id="3.40.50.300:FF:000087">
    <property type="entry name" value="Recombinase RecA"/>
    <property type="match status" value="1"/>
</dbReference>
<dbReference type="Gene3D" id="3.40.50.300">
    <property type="entry name" value="P-loop containing nucleotide triphosphate hydrolases"/>
    <property type="match status" value="1"/>
</dbReference>
<dbReference type="HAMAP" id="MF_00268">
    <property type="entry name" value="RecA"/>
    <property type="match status" value="1"/>
</dbReference>
<dbReference type="InterPro" id="IPR003593">
    <property type="entry name" value="AAA+_ATPase"/>
</dbReference>
<dbReference type="InterPro" id="IPR013765">
    <property type="entry name" value="DNA_recomb/repair_RecA"/>
</dbReference>
<dbReference type="InterPro" id="IPR020584">
    <property type="entry name" value="DNA_recomb/repair_RecA_CS"/>
</dbReference>
<dbReference type="InterPro" id="IPR027417">
    <property type="entry name" value="P-loop_NTPase"/>
</dbReference>
<dbReference type="InterPro" id="IPR049261">
    <property type="entry name" value="RecA-like_C"/>
</dbReference>
<dbReference type="InterPro" id="IPR049428">
    <property type="entry name" value="RecA-like_N"/>
</dbReference>
<dbReference type="InterPro" id="IPR020588">
    <property type="entry name" value="RecA_ATP-bd"/>
</dbReference>
<dbReference type="InterPro" id="IPR023400">
    <property type="entry name" value="RecA_C_sf"/>
</dbReference>
<dbReference type="InterPro" id="IPR020587">
    <property type="entry name" value="RecA_monomer-monomer_interface"/>
</dbReference>
<dbReference type="NCBIfam" id="TIGR02012">
    <property type="entry name" value="tigrfam_recA"/>
    <property type="match status" value="1"/>
</dbReference>
<dbReference type="PANTHER" id="PTHR45900:SF1">
    <property type="entry name" value="MITOCHONDRIAL DNA REPAIR PROTEIN RECA HOMOLOG-RELATED"/>
    <property type="match status" value="1"/>
</dbReference>
<dbReference type="PANTHER" id="PTHR45900">
    <property type="entry name" value="RECA"/>
    <property type="match status" value="1"/>
</dbReference>
<dbReference type="Pfam" id="PF00154">
    <property type="entry name" value="RecA"/>
    <property type="match status" value="1"/>
</dbReference>
<dbReference type="Pfam" id="PF21096">
    <property type="entry name" value="RecA_C"/>
    <property type="match status" value="1"/>
</dbReference>
<dbReference type="PRINTS" id="PR00142">
    <property type="entry name" value="RECA"/>
</dbReference>
<dbReference type="SMART" id="SM00382">
    <property type="entry name" value="AAA"/>
    <property type="match status" value="1"/>
</dbReference>
<dbReference type="SUPFAM" id="SSF52540">
    <property type="entry name" value="P-loop containing nucleoside triphosphate hydrolases"/>
    <property type="match status" value="1"/>
</dbReference>
<dbReference type="SUPFAM" id="SSF54752">
    <property type="entry name" value="RecA protein, C-terminal domain"/>
    <property type="match status" value="1"/>
</dbReference>
<dbReference type="PROSITE" id="PS00321">
    <property type="entry name" value="RECA_1"/>
    <property type="match status" value="1"/>
</dbReference>
<dbReference type="PROSITE" id="PS50162">
    <property type="entry name" value="RECA_2"/>
    <property type="match status" value="1"/>
</dbReference>
<dbReference type="PROSITE" id="PS50163">
    <property type="entry name" value="RECA_3"/>
    <property type="match status" value="1"/>
</dbReference>
<reference key="1">
    <citation type="journal article" date="2007" name="Genome Res.">
        <title>Lateral gene transfer between obligate intracellular bacteria: evidence from the Rickettsia massiliae genome.</title>
        <authorList>
            <person name="Blanc G."/>
            <person name="Ogata H."/>
            <person name="Robert C."/>
            <person name="Audic S."/>
            <person name="Claverie J.-M."/>
            <person name="Raoult D."/>
        </authorList>
    </citation>
    <scope>NUCLEOTIDE SEQUENCE [LARGE SCALE GENOMIC DNA]</scope>
    <source>
        <strain>Mtu5</strain>
    </source>
</reference>
<protein>
    <recommendedName>
        <fullName evidence="1">Protein RecA</fullName>
    </recommendedName>
    <alternativeName>
        <fullName evidence="1">Recombinase A</fullName>
    </alternativeName>
</protein>
<gene>
    <name evidence="1" type="primary">recA</name>
    <name type="ordered locus">RMA_1203</name>
</gene>
<keyword id="KW-0067">ATP-binding</keyword>
<keyword id="KW-0963">Cytoplasm</keyword>
<keyword id="KW-0227">DNA damage</keyword>
<keyword id="KW-0233">DNA recombination</keyword>
<keyword id="KW-0234">DNA repair</keyword>
<keyword id="KW-0238">DNA-binding</keyword>
<keyword id="KW-0547">Nucleotide-binding</keyword>
<keyword id="KW-0742">SOS response</keyword>
<feature type="chain" id="PRO_1000059132" description="Protein RecA">
    <location>
        <begin position="1"/>
        <end position="343"/>
    </location>
</feature>
<feature type="binding site" evidence="1">
    <location>
        <begin position="66"/>
        <end position="73"/>
    </location>
    <ligand>
        <name>ATP</name>
        <dbReference type="ChEBI" id="CHEBI:30616"/>
    </ligand>
</feature>
<name>RECA_RICM5</name>
<comment type="function">
    <text evidence="1">Can catalyze the hydrolysis of ATP in the presence of single-stranded DNA, the ATP-dependent uptake of single-stranded DNA by duplex DNA, and the ATP-dependent hybridization of homologous single-stranded DNAs. It interacts with LexA causing its activation and leading to its autocatalytic cleavage.</text>
</comment>
<comment type="subcellular location">
    <subcellularLocation>
        <location evidence="1">Cytoplasm</location>
    </subcellularLocation>
</comment>
<comment type="similarity">
    <text evidence="1">Belongs to the RecA family.</text>
</comment>
<accession>A8F2Q0</accession>
<sequence length="343" mass="37162">MSNTDKERAIAAALAQIEKSYGKGSVMKLGQRPHVDIEAVSTGSLGLDIALGIGGIPKGRIIEIFGPESSGKTTLTLHLIAEAQKKGGTCAFIDAEHALDPAYAKKLGVNIDELIISQPDTGEQALEIADTLIRSGGIDMIIIDSVAALVPKSEIEGEMGDAQMASQARLMSQALRKLTASINRTNCITVFINQIRMKIGVMFGSPETTTGGNALKFYASVRIDIRRIGSIKDKEEVIGSQTKVKVVKNKVSPPFKTADFDIMYGSGISKEGEIIDLGVKLDIVEKSGSWFSYKNVRIGQGRENVKQYLKEHPQISNEIEKIIREKSSKITNINLDQTGEEND</sequence>
<proteinExistence type="inferred from homology"/>